<gene>
    <name type="primary">IRC22</name>
    <name type="ORF">C1Q_00709</name>
</gene>
<organism>
    <name type="scientific">Saccharomyces cerevisiae (strain JAY291)</name>
    <name type="common">Baker's yeast</name>
    <dbReference type="NCBI Taxonomy" id="574961"/>
    <lineage>
        <taxon>Eukaryota</taxon>
        <taxon>Fungi</taxon>
        <taxon>Dikarya</taxon>
        <taxon>Ascomycota</taxon>
        <taxon>Saccharomycotina</taxon>
        <taxon>Saccharomycetes</taxon>
        <taxon>Saccharomycetales</taxon>
        <taxon>Saccharomycetaceae</taxon>
        <taxon>Saccharomyces</taxon>
    </lineage>
</organism>
<dbReference type="EMBL" id="ACFL01000024">
    <property type="protein sequence ID" value="EEU08676.1"/>
    <property type="molecule type" value="Genomic_DNA"/>
</dbReference>
<dbReference type="Proteomes" id="UP000008073">
    <property type="component" value="Unassembled WGS sequence"/>
</dbReference>
<dbReference type="GO" id="GO:0005789">
    <property type="term" value="C:endoplasmic reticulum membrane"/>
    <property type="evidence" value="ECO:0007669"/>
    <property type="project" value="UniProtKB-SubCell"/>
</dbReference>
<dbReference type="InterPro" id="IPR005595">
    <property type="entry name" value="TRAP_alpha"/>
</dbReference>
<dbReference type="Pfam" id="PF03896">
    <property type="entry name" value="TRAP_alpha"/>
    <property type="match status" value="1"/>
</dbReference>
<accession>C7GKH8</accession>
<proteinExistence type="inferred from homology"/>
<name>IRC22_YEAS2</name>
<reference key="1">
    <citation type="journal article" date="2009" name="Genome Res.">
        <title>Genome structure of a Saccharomyces cerevisiae strain widely used in bioethanol production.</title>
        <authorList>
            <person name="Argueso J.L."/>
            <person name="Carazzolle M.F."/>
            <person name="Mieczkowski P.A."/>
            <person name="Duarte F.M."/>
            <person name="Netto O.V.C."/>
            <person name="Missawa S.K."/>
            <person name="Galzerani F."/>
            <person name="Costa G.G.L."/>
            <person name="Vidal R.O."/>
            <person name="Noronha M.F."/>
            <person name="Dominska M."/>
            <person name="Andrietta M.G.S."/>
            <person name="Andrietta S.R."/>
            <person name="Cunha A.F."/>
            <person name="Gomes L.H."/>
            <person name="Tavares F.C.A."/>
            <person name="Alcarde A.R."/>
            <person name="Dietrich F.S."/>
            <person name="McCusker J.H."/>
            <person name="Petes T.D."/>
            <person name="Pereira G.A.G."/>
        </authorList>
    </citation>
    <scope>NUCLEOTIDE SEQUENCE [LARGE SCALE GENOMIC DNA]</scope>
    <source>
        <strain>JAY291</strain>
    </source>
</reference>
<sequence>MRFSMLIGFNLLTALSSFCAAISANNSDNVEHEQEVAEAVAPPSINIEVKYDVVGKESENHDSFLEFYAEDTATLAYNVTNWEDTNITIFGVNGTIVTYPHGYPVADITGASIGPYEMEVNGTSKFGQDVTLNLPEGQYFLIPFLLASRFDEIVRIAAPPTLFEIVSPPISFFNPQFLSVQVIFLAIIGGVSYYYMKSKTNQRPSKKSATVKKVDESWLPETYKK</sequence>
<feature type="signal peptide" evidence="2">
    <location>
        <begin position="1"/>
        <end position="21"/>
    </location>
</feature>
<feature type="chain" id="PRO_0000399087" description="Increased recombination centers protein 22">
    <location>
        <begin position="22"/>
        <end position="225"/>
    </location>
</feature>
<feature type="topological domain" description="Lumenal" evidence="2">
    <location>
        <begin position="22"/>
        <end position="169"/>
    </location>
</feature>
<feature type="transmembrane region" description="Helical" evidence="2">
    <location>
        <begin position="170"/>
        <end position="190"/>
    </location>
</feature>
<feature type="topological domain" description="Cytoplasmic" evidence="2">
    <location>
        <begin position="191"/>
        <end position="225"/>
    </location>
</feature>
<feature type="region of interest" description="Disordered" evidence="3">
    <location>
        <begin position="203"/>
        <end position="225"/>
    </location>
</feature>
<feature type="compositionally biased region" description="Basic and acidic residues" evidence="3">
    <location>
        <begin position="212"/>
        <end position="225"/>
    </location>
</feature>
<keyword id="KW-0256">Endoplasmic reticulum</keyword>
<keyword id="KW-0472">Membrane</keyword>
<keyword id="KW-0732">Signal</keyword>
<keyword id="KW-0812">Transmembrane</keyword>
<keyword id="KW-1133">Transmembrane helix</keyword>
<comment type="function">
    <text>Is probably involved in a pathway contributing to genomic integrity.</text>
</comment>
<comment type="subcellular location">
    <subcellularLocation>
        <location evidence="1">Endoplasmic reticulum membrane</location>
        <topology evidence="1">Single-pass type I membrane protein</topology>
    </subcellularLocation>
</comment>
<comment type="similarity">
    <text evidence="4">Belongs to the IRC22 family.</text>
</comment>
<protein>
    <recommendedName>
        <fullName>Increased recombination centers protein 22</fullName>
    </recommendedName>
</protein>
<evidence type="ECO:0000250" key="1"/>
<evidence type="ECO:0000255" key="2"/>
<evidence type="ECO:0000256" key="3">
    <source>
        <dbReference type="SAM" id="MobiDB-lite"/>
    </source>
</evidence>
<evidence type="ECO:0000305" key="4"/>